<evidence type="ECO:0000255" key="1">
    <source>
        <dbReference type="HAMAP-Rule" id="MF_01838"/>
    </source>
</evidence>
<gene>
    <name evidence="1" type="primary">fabV2</name>
    <name type="ordered locus">VPA0870</name>
</gene>
<dbReference type="EC" id="1.3.1.9" evidence="1"/>
<dbReference type="EMBL" id="BA000032">
    <property type="protein sequence ID" value="BAC62213.1"/>
    <property type="molecule type" value="Genomic_DNA"/>
</dbReference>
<dbReference type="RefSeq" id="NP_800380.1">
    <property type="nucleotide sequence ID" value="NC_004605.1"/>
</dbReference>
<dbReference type="SMR" id="Q87HT6"/>
<dbReference type="GeneID" id="1191559"/>
<dbReference type="KEGG" id="vpa:VPA0870"/>
<dbReference type="PATRIC" id="fig|223926.6.peg.3804"/>
<dbReference type="eggNOG" id="COG3007">
    <property type="taxonomic scope" value="Bacteria"/>
</dbReference>
<dbReference type="HOGENOM" id="CLU_057698_1_0_6"/>
<dbReference type="UniPathway" id="UPA00094"/>
<dbReference type="Proteomes" id="UP000002493">
    <property type="component" value="Chromosome 2"/>
</dbReference>
<dbReference type="GO" id="GO:0004318">
    <property type="term" value="F:enoyl-[acyl-carrier-protein] reductase (NADH) activity"/>
    <property type="evidence" value="ECO:0007669"/>
    <property type="project" value="UniProtKB-UniRule"/>
</dbReference>
<dbReference type="GO" id="GO:0051287">
    <property type="term" value="F:NAD binding"/>
    <property type="evidence" value="ECO:0007669"/>
    <property type="project" value="UniProtKB-UniRule"/>
</dbReference>
<dbReference type="GO" id="GO:0050343">
    <property type="term" value="F:trans-2-enoyl-CoA reductase (NADH) activity"/>
    <property type="evidence" value="ECO:0007669"/>
    <property type="project" value="TreeGrafter"/>
</dbReference>
<dbReference type="GO" id="GO:0006633">
    <property type="term" value="P:fatty acid biosynthetic process"/>
    <property type="evidence" value="ECO:0007669"/>
    <property type="project" value="UniProtKB-UniRule"/>
</dbReference>
<dbReference type="Gene3D" id="3.40.50.720">
    <property type="entry name" value="NAD(P)-binding Rossmann-like Domain"/>
    <property type="match status" value="1"/>
</dbReference>
<dbReference type="HAMAP" id="MF_01838">
    <property type="entry name" value="FabV_reductase"/>
    <property type="match status" value="1"/>
</dbReference>
<dbReference type="InterPro" id="IPR024906">
    <property type="entry name" value="Eno_Rdtase_FAD-bd_dom"/>
</dbReference>
<dbReference type="InterPro" id="IPR024910">
    <property type="entry name" value="Enoyl-CoA_Rdtase_cat_dom"/>
</dbReference>
<dbReference type="InterPro" id="IPR050048">
    <property type="entry name" value="FabV-like_NADH_b"/>
</dbReference>
<dbReference type="InterPro" id="IPR036291">
    <property type="entry name" value="NAD(P)-bd_dom_sf"/>
</dbReference>
<dbReference type="InterPro" id="IPR010758">
    <property type="entry name" value="Trans-2-enoyl-CoA_reductase"/>
</dbReference>
<dbReference type="NCBIfam" id="NF043048">
    <property type="entry name" value="EnoyACPredFabV"/>
    <property type="match status" value="1"/>
</dbReference>
<dbReference type="NCBIfam" id="NF010177">
    <property type="entry name" value="PRK13656.1"/>
    <property type="match status" value="1"/>
</dbReference>
<dbReference type="PANTHER" id="PTHR37480">
    <property type="entry name" value="ENOYL-[ACYL-CARRIER-PROTEIN] REDUCTASE [NADH]"/>
    <property type="match status" value="1"/>
</dbReference>
<dbReference type="PANTHER" id="PTHR37480:SF1">
    <property type="entry name" value="ENOYL-[ACYL-CARRIER-PROTEIN] REDUCTASE [NADH]"/>
    <property type="match status" value="1"/>
</dbReference>
<dbReference type="Pfam" id="PF07055">
    <property type="entry name" value="Eno-Rase_FAD_bd"/>
    <property type="match status" value="1"/>
</dbReference>
<dbReference type="Pfam" id="PF12242">
    <property type="entry name" value="Eno-Rase_NADH_b"/>
    <property type="match status" value="1"/>
</dbReference>
<dbReference type="Pfam" id="PF12241">
    <property type="entry name" value="Enoyl_reductase"/>
    <property type="match status" value="1"/>
</dbReference>
<dbReference type="SUPFAM" id="SSF51735">
    <property type="entry name" value="NAD(P)-binding Rossmann-fold domains"/>
    <property type="match status" value="1"/>
</dbReference>
<sequence>MRIEPLIQGVVARSAHPYGCHASIKEQIEYVKKAPKIKSGPKRVLIIGASSGFGLAARIALTFGGAEADTIGVSFERGPSEKGVGSAGWYNNIFFKQEATHAGRTAINIVGDAFSDSVRNEVIEAIETYFEGEVDLVIYSLAAGVRPKPHSDTFWRSVIKPIGESVTGASILLENDQWVETTLEPATEEEAEATIKVMGGEDWESWIDTLINTESVAQGCKTIAFSYMGPEVTHPIYLDGTLGRAKIDLHQTSHALNLKLANFDGGAYATVCKALVTKASVFIPALSPYLLALYRVMKEKGTHERCIEQMQRLFTTKLYDQPKVPVDGERLIRIDDLELDPQTQAEVSHLLEQMNTENFKECGDYQGFKDEFMKLNGFNFDDVDYSQDISLETLASLKP</sequence>
<organism>
    <name type="scientific">Vibrio parahaemolyticus serotype O3:K6 (strain RIMD 2210633)</name>
    <dbReference type="NCBI Taxonomy" id="223926"/>
    <lineage>
        <taxon>Bacteria</taxon>
        <taxon>Pseudomonadati</taxon>
        <taxon>Pseudomonadota</taxon>
        <taxon>Gammaproteobacteria</taxon>
        <taxon>Vibrionales</taxon>
        <taxon>Vibrionaceae</taxon>
        <taxon>Vibrio</taxon>
    </lineage>
</organism>
<accession>Q87HT6</accession>
<comment type="function">
    <text evidence="1">Involved in the final reduction of the elongation cycle of fatty acid synthesis (FAS II). Catalyzes the reduction of a carbon-carbon double bond in an enoyl moiety that is covalently linked to an acyl carrier protein (ACP).</text>
</comment>
<comment type="catalytic activity">
    <reaction evidence="1">
        <text>a 2,3-saturated acyl-[ACP] + NAD(+) = a (2E)-enoyl-[ACP] + NADH + H(+)</text>
        <dbReference type="Rhea" id="RHEA:10240"/>
        <dbReference type="Rhea" id="RHEA-COMP:9925"/>
        <dbReference type="Rhea" id="RHEA-COMP:9926"/>
        <dbReference type="ChEBI" id="CHEBI:15378"/>
        <dbReference type="ChEBI" id="CHEBI:57540"/>
        <dbReference type="ChEBI" id="CHEBI:57945"/>
        <dbReference type="ChEBI" id="CHEBI:78784"/>
        <dbReference type="ChEBI" id="CHEBI:78785"/>
        <dbReference type="EC" id="1.3.1.9"/>
    </reaction>
</comment>
<comment type="pathway">
    <text evidence="1">Lipid metabolism; fatty acid biosynthesis.</text>
</comment>
<comment type="subunit">
    <text evidence="1">Monomer.</text>
</comment>
<comment type="similarity">
    <text evidence="1">Belongs to the TER reductase family.</text>
</comment>
<protein>
    <recommendedName>
        <fullName evidence="1">Enoyl-[acyl-carrier-protein] reductase [NADH] 2</fullName>
        <shortName evidence="1">ENR 2</shortName>
        <ecNumber evidence="1">1.3.1.9</ecNumber>
    </recommendedName>
</protein>
<feature type="chain" id="PRO_0000220053" description="Enoyl-[acyl-carrier-protein] reductase [NADH] 2">
    <location>
        <begin position="1"/>
        <end position="399"/>
    </location>
</feature>
<feature type="active site" description="Proton donor" evidence="1">
    <location>
        <position position="237"/>
    </location>
</feature>
<feature type="binding site" evidence="1">
    <location>
        <begin position="48"/>
        <end position="53"/>
    </location>
    <ligand>
        <name>NAD(+)</name>
        <dbReference type="ChEBI" id="CHEBI:57540"/>
    </ligand>
</feature>
<feature type="binding site" evidence="1">
    <location>
        <begin position="75"/>
        <end position="76"/>
    </location>
    <ligand>
        <name>NAD(+)</name>
        <dbReference type="ChEBI" id="CHEBI:57540"/>
    </ligand>
</feature>
<feature type="binding site" evidence="1">
    <location>
        <begin position="112"/>
        <end position="113"/>
    </location>
    <ligand>
        <name>NAD(+)</name>
        <dbReference type="ChEBI" id="CHEBI:57540"/>
    </ligand>
</feature>
<feature type="binding site" evidence="1">
    <location>
        <begin position="141"/>
        <end position="142"/>
    </location>
    <ligand>
        <name>NAD(+)</name>
        <dbReference type="ChEBI" id="CHEBI:57540"/>
    </ligand>
</feature>
<feature type="binding site" evidence="1">
    <location>
        <position position="227"/>
    </location>
    <ligand>
        <name>substrate</name>
    </ligand>
</feature>
<feature type="binding site" evidence="1">
    <location>
        <position position="246"/>
    </location>
    <ligand>
        <name>NAD(+)</name>
        <dbReference type="ChEBI" id="CHEBI:57540"/>
    </ligand>
</feature>
<feature type="binding site" evidence="1">
    <location>
        <begin position="275"/>
        <end position="277"/>
    </location>
    <ligand>
        <name>NAD(+)</name>
        <dbReference type="ChEBI" id="CHEBI:57540"/>
    </ligand>
</feature>
<feature type="site" description="Plays an important role in discriminating NADH against NADPH" evidence="1">
    <location>
        <position position="76"/>
    </location>
</feature>
<proteinExistence type="inferred from homology"/>
<name>FABV2_VIBPA</name>
<reference key="1">
    <citation type="journal article" date="2003" name="Lancet">
        <title>Genome sequence of Vibrio parahaemolyticus: a pathogenic mechanism distinct from that of V. cholerae.</title>
        <authorList>
            <person name="Makino K."/>
            <person name="Oshima K."/>
            <person name="Kurokawa K."/>
            <person name="Yokoyama K."/>
            <person name="Uda T."/>
            <person name="Tagomori K."/>
            <person name="Iijima Y."/>
            <person name="Najima M."/>
            <person name="Nakano M."/>
            <person name="Yamashita A."/>
            <person name="Kubota Y."/>
            <person name="Kimura S."/>
            <person name="Yasunaga T."/>
            <person name="Honda T."/>
            <person name="Shinagawa H."/>
            <person name="Hattori M."/>
            <person name="Iida T."/>
        </authorList>
    </citation>
    <scope>NUCLEOTIDE SEQUENCE [LARGE SCALE GENOMIC DNA]</scope>
    <source>
        <strain>RIMD 2210633</strain>
    </source>
</reference>
<keyword id="KW-0275">Fatty acid biosynthesis</keyword>
<keyword id="KW-0276">Fatty acid metabolism</keyword>
<keyword id="KW-0444">Lipid biosynthesis</keyword>
<keyword id="KW-0443">Lipid metabolism</keyword>
<keyword id="KW-0520">NAD</keyword>
<keyword id="KW-0560">Oxidoreductase</keyword>